<comment type="function">
    <text evidence="1">Catalyzes the conversion of L-arabinose to L-ribulose.</text>
</comment>
<comment type="catalytic activity">
    <reaction evidence="1">
        <text>beta-L-arabinopyranose = L-ribulose</text>
        <dbReference type="Rhea" id="RHEA:14821"/>
        <dbReference type="ChEBI" id="CHEBI:16880"/>
        <dbReference type="ChEBI" id="CHEBI:40886"/>
        <dbReference type="EC" id="5.3.1.4"/>
    </reaction>
</comment>
<comment type="cofactor">
    <cofactor evidence="1">
        <name>Mn(2+)</name>
        <dbReference type="ChEBI" id="CHEBI:29035"/>
    </cofactor>
    <text evidence="1">Binds 1 Mn(2+) ion per subunit.</text>
</comment>
<comment type="pathway">
    <text evidence="1">Carbohydrate degradation; L-arabinose degradation via L-ribulose; D-xylulose 5-phosphate from L-arabinose (bacterial route): step 1/3.</text>
</comment>
<comment type="subunit">
    <text evidence="1">Homohexamer.</text>
</comment>
<comment type="similarity">
    <text evidence="1">Belongs to the arabinose isomerase family.</text>
</comment>
<gene>
    <name evidence="1" type="primary">araA</name>
    <name type="ordered locus">ECUMN_0063</name>
</gene>
<feature type="chain" id="PRO_1000127603" description="L-arabinose isomerase">
    <location>
        <begin position="1"/>
        <end position="500"/>
    </location>
</feature>
<feature type="binding site" evidence="1">
    <location>
        <position position="306"/>
    </location>
    <ligand>
        <name>Mn(2+)</name>
        <dbReference type="ChEBI" id="CHEBI:29035"/>
    </ligand>
</feature>
<feature type="binding site" evidence="1">
    <location>
        <position position="333"/>
    </location>
    <ligand>
        <name>Mn(2+)</name>
        <dbReference type="ChEBI" id="CHEBI:29035"/>
    </ligand>
</feature>
<feature type="binding site" evidence="1">
    <location>
        <position position="350"/>
    </location>
    <ligand>
        <name>Mn(2+)</name>
        <dbReference type="ChEBI" id="CHEBI:29035"/>
    </ligand>
</feature>
<feature type="binding site" evidence="1">
    <location>
        <position position="450"/>
    </location>
    <ligand>
        <name>Mn(2+)</name>
        <dbReference type="ChEBI" id="CHEBI:29035"/>
    </ligand>
</feature>
<organism>
    <name type="scientific">Escherichia coli O17:K52:H18 (strain UMN026 / ExPEC)</name>
    <dbReference type="NCBI Taxonomy" id="585056"/>
    <lineage>
        <taxon>Bacteria</taxon>
        <taxon>Pseudomonadati</taxon>
        <taxon>Pseudomonadota</taxon>
        <taxon>Gammaproteobacteria</taxon>
        <taxon>Enterobacterales</taxon>
        <taxon>Enterobacteriaceae</taxon>
        <taxon>Escherichia</taxon>
    </lineage>
</organism>
<sequence length="500" mass="56089">MTIFDNYEVWFVIGSQHLYGPETLRQVTQHAEHVVNALNTEAKLPCKLVLKPLGTTPDEITAICRDANYDDRCAGLVVWLHTFSPAKMWINGLTMLNKPLLQFHTQFNAALPWDSIDMDFMNLNQTAHGGREFGFIGARMRQQHAVVTGHWQDKQAHERIGSWMRQAVSKQDTRHLKVCRFGDNMREVAVTDGDKVAAQIKFGFSINTWAVGDLVQVVNSISDGDVNALVDEYESCYTMTPATQIHGEKRQNVLEAARIELGMKRFLEQGGFHAFTTTFEDLHGLKQLPGLAVQRLMQQGYGFAGEGDWKTAALLRIMKVMSTGLQGGTSFMEDYTYHFEKGNDLVLGSHMLEVCPSIAAEEKPILDVQHLGIGGKDDPARLIFNTQTGPAIVASLIDLGDRYRLLVNCIDTVKTPHSLPKLPVANALWKAQPDLPTASEAWILAGGAHHTVFSHALNLNDMRQFAEMHDIEITVIDNDTRLPAFKDALRWNEVYYGFRR</sequence>
<dbReference type="EC" id="5.3.1.4" evidence="1"/>
<dbReference type="EMBL" id="CU928163">
    <property type="protein sequence ID" value="CAR11286.1"/>
    <property type="molecule type" value="Genomic_DNA"/>
</dbReference>
<dbReference type="RefSeq" id="WP_000151722.1">
    <property type="nucleotide sequence ID" value="NC_011751.1"/>
</dbReference>
<dbReference type="RefSeq" id="YP_002410841.1">
    <property type="nucleotide sequence ID" value="NC_011751.1"/>
</dbReference>
<dbReference type="SMR" id="B7N7T6"/>
<dbReference type="STRING" id="585056.ECUMN_0063"/>
<dbReference type="KEGG" id="eum:ECUMN_0063"/>
<dbReference type="PATRIC" id="fig|585056.7.peg.251"/>
<dbReference type="HOGENOM" id="CLU_045663_0_0_6"/>
<dbReference type="UniPathway" id="UPA00145">
    <property type="reaction ID" value="UER00565"/>
</dbReference>
<dbReference type="Proteomes" id="UP000007097">
    <property type="component" value="Chromosome"/>
</dbReference>
<dbReference type="GO" id="GO:0005829">
    <property type="term" value="C:cytosol"/>
    <property type="evidence" value="ECO:0007669"/>
    <property type="project" value="TreeGrafter"/>
</dbReference>
<dbReference type="GO" id="GO:0008733">
    <property type="term" value="F:L-arabinose isomerase activity"/>
    <property type="evidence" value="ECO:0007669"/>
    <property type="project" value="UniProtKB-UniRule"/>
</dbReference>
<dbReference type="GO" id="GO:0030145">
    <property type="term" value="F:manganese ion binding"/>
    <property type="evidence" value="ECO:0007669"/>
    <property type="project" value="UniProtKB-UniRule"/>
</dbReference>
<dbReference type="GO" id="GO:0019569">
    <property type="term" value="P:L-arabinose catabolic process to xylulose 5-phosphate"/>
    <property type="evidence" value="ECO:0007669"/>
    <property type="project" value="UniProtKB-UniRule"/>
</dbReference>
<dbReference type="CDD" id="cd03557">
    <property type="entry name" value="L-arabinose_isomerase"/>
    <property type="match status" value="1"/>
</dbReference>
<dbReference type="FunFam" id="3.40.50.10940:FF:000001">
    <property type="entry name" value="L-arabinose isomerase"/>
    <property type="match status" value="1"/>
</dbReference>
<dbReference type="Gene3D" id="3.40.50.10940">
    <property type="match status" value="1"/>
</dbReference>
<dbReference type="HAMAP" id="MF_00519">
    <property type="entry name" value="Arabinose_Isome"/>
    <property type="match status" value="1"/>
</dbReference>
<dbReference type="InterPro" id="IPR024664">
    <property type="entry name" value="Ara_Isoase_C"/>
</dbReference>
<dbReference type="InterPro" id="IPR055390">
    <property type="entry name" value="AraA_central"/>
</dbReference>
<dbReference type="InterPro" id="IPR055389">
    <property type="entry name" value="AraA_N"/>
</dbReference>
<dbReference type="InterPro" id="IPR038583">
    <property type="entry name" value="AraA_N_sf"/>
</dbReference>
<dbReference type="InterPro" id="IPR004216">
    <property type="entry name" value="Fuc/Ara_isomerase_C"/>
</dbReference>
<dbReference type="InterPro" id="IPR009015">
    <property type="entry name" value="Fucose_isomerase_N/cen_sf"/>
</dbReference>
<dbReference type="InterPro" id="IPR003762">
    <property type="entry name" value="Lara_isomerase"/>
</dbReference>
<dbReference type="NCBIfam" id="NF002795">
    <property type="entry name" value="PRK02929.1"/>
    <property type="match status" value="1"/>
</dbReference>
<dbReference type="PANTHER" id="PTHR38464">
    <property type="entry name" value="L-ARABINOSE ISOMERASE"/>
    <property type="match status" value="1"/>
</dbReference>
<dbReference type="PANTHER" id="PTHR38464:SF1">
    <property type="entry name" value="L-ARABINOSE ISOMERASE"/>
    <property type="match status" value="1"/>
</dbReference>
<dbReference type="Pfam" id="PF24856">
    <property type="entry name" value="AraA_central"/>
    <property type="match status" value="1"/>
</dbReference>
<dbReference type="Pfam" id="PF02610">
    <property type="entry name" value="AraA_N"/>
    <property type="match status" value="1"/>
</dbReference>
<dbReference type="Pfam" id="PF11762">
    <property type="entry name" value="Arabinose_Iso_C"/>
    <property type="match status" value="1"/>
</dbReference>
<dbReference type="PIRSF" id="PIRSF001478">
    <property type="entry name" value="L-ara_isomerase"/>
    <property type="match status" value="1"/>
</dbReference>
<dbReference type="SUPFAM" id="SSF50443">
    <property type="entry name" value="FucI/AraA C-terminal domain-like"/>
    <property type="match status" value="1"/>
</dbReference>
<dbReference type="SUPFAM" id="SSF53743">
    <property type="entry name" value="FucI/AraA N-terminal and middle domains"/>
    <property type="match status" value="1"/>
</dbReference>
<keyword id="KW-0054">Arabinose catabolism</keyword>
<keyword id="KW-0119">Carbohydrate metabolism</keyword>
<keyword id="KW-0413">Isomerase</keyword>
<keyword id="KW-0464">Manganese</keyword>
<keyword id="KW-0479">Metal-binding</keyword>
<name>ARAA_ECOLU</name>
<protein>
    <recommendedName>
        <fullName evidence="1">L-arabinose isomerase</fullName>
        <ecNumber evidence="1">5.3.1.4</ecNumber>
    </recommendedName>
</protein>
<evidence type="ECO:0000255" key="1">
    <source>
        <dbReference type="HAMAP-Rule" id="MF_00519"/>
    </source>
</evidence>
<reference key="1">
    <citation type="journal article" date="2009" name="PLoS Genet.">
        <title>Organised genome dynamics in the Escherichia coli species results in highly diverse adaptive paths.</title>
        <authorList>
            <person name="Touchon M."/>
            <person name="Hoede C."/>
            <person name="Tenaillon O."/>
            <person name="Barbe V."/>
            <person name="Baeriswyl S."/>
            <person name="Bidet P."/>
            <person name="Bingen E."/>
            <person name="Bonacorsi S."/>
            <person name="Bouchier C."/>
            <person name="Bouvet O."/>
            <person name="Calteau A."/>
            <person name="Chiapello H."/>
            <person name="Clermont O."/>
            <person name="Cruveiller S."/>
            <person name="Danchin A."/>
            <person name="Diard M."/>
            <person name="Dossat C."/>
            <person name="Karoui M.E."/>
            <person name="Frapy E."/>
            <person name="Garry L."/>
            <person name="Ghigo J.M."/>
            <person name="Gilles A.M."/>
            <person name="Johnson J."/>
            <person name="Le Bouguenec C."/>
            <person name="Lescat M."/>
            <person name="Mangenot S."/>
            <person name="Martinez-Jehanne V."/>
            <person name="Matic I."/>
            <person name="Nassif X."/>
            <person name="Oztas S."/>
            <person name="Petit M.A."/>
            <person name="Pichon C."/>
            <person name="Rouy Z."/>
            <person name="Ruf C.S."/>
            <person name="Schneider D."/>
            <person name="Tourret J."/>
            <person name="Vacherie B."/>
            <person name="Vallenet D."/>
            <person name="Medigue C."/>
            <person name="Rocha E.P.C."/>
            <person name="Denamur E."/>
        </authorList>
    </citation>
    <scope>NUCLEOTIDE SEQUENCE [LARGE SCALE GENOMIC DNA]</scope>
    <source>
        <strain>UMN026 / ExPEC</strain>
    </source>
</reference>
<proteinExistence type="inferred from homology"/>
<accession>B7N7T6</accession>